<evidence type="ECO:0000250" key="1"/>
<evidence type="ECO:0000250" key="2">
    <source>
        <dbReference type="UniProtKB" id="P02253"/>
    </source>
</evidence>
<evidence type="ECO:0000250" key="3">
    <source>
        <dbReference type="UniProtKB" id="P15864"/>
    </source>
</evidence>
<evidence type="ECO:0000250" key="4">
    <source>
        <dbReference type="UniProtKB" id="P43277"/>
    </source>
</evidence>
<evidence type="ECO:0000255" key="5">
    <source>
        <dbReference type="PROSITE-ProRule" id="PRU00837"/>
    </source>
</evidence>
<evidence type="ECO:0000256" key="6">
    <source>
        <dbReference type="SAM" id="MobiDB-lite"/>
    </source>
</evidence>
<evidence type="ECO:0000269" key="7">
    <source>
    </source>
</evidence>
<evidence type="ECO:0000269" key="8">
    <source>
    </source>
</evidence>
<evidence type="ECO:0000269" key="9">
    <source>
    </source>
</evidence>
<evidence type="ECO:0000269" key="10">
    <source>
    </source>
</evidence>
<evidence type="ECO:0000269" key="11">
    <source>
    </source>
</evidence>
<evidence type="ECO:0000269" key="12">
    <source>
    </source>
</evidence>
<evidence type="ECO:0000269" key="13">
    <source ref="10"/>
</evidence>
<evidence type="ECO:0000269" key="14">
    <source ref="9"/>
</evidence>
<evidence type="ECO:0000312" key="15">
    <source>
        <dbReference type="HGNC" id="HGNC:4716"/>
    </source>
</evidence>
<evidence type="ECO:0007744" key="16">
    <source>
    </source>
</evidence>
<evidence type="ECO:0007744" key="17">
    <source>
    </source>
</evidence>
<evidence type="ECO:0007744" key="18">
    <source>
    </source>
</evidence>
<evidence type="ECO:0007744" key="19">
    <source>
    </source>
</evidence>
<evidence type="ECO:0007744" key="20">
    <source>
    </source>
</evidence>
<evidence type="ECO:0007744" key="21">
    <source>
    </source>
</evidence>
<dbReference type="EMBL" id="X57129">
    <property type="protein sequence ID" value="CAA40408.1"/>
    <property type="molecule type" value="Genomic_DNA"/>
</dbReference>
<dbReference type="EMBL" id="AF531300">
    <property type="protein sequence ID" value="AAN06700.1"/>
    <property type="molecule type" value="Genomic_DNA"/>
</dbReference>
<dbReference type="EMBL" id="AK290947">
    <property type="protein sequence ID" value="BAF83636.1"/>
    <property type="molecule type" value="mRNA"/>
</dbReference>
<dbReference type="EMBL" id="AB451259">
    <property type="protein sequence ID" value="BAG70073.1"/>
    <property type="molecule type" value="mRNA"/>
</dbReference>
<dbReference type="EMBL" id="AB451385">
    <property type="protein sequence ID" value="BAG70199.1"/>
    <property type="molecule type" value="mRNA"/>
</dbReference>
<dbReference type="EMBL" id="U91328">
    <property type="status" value="NOT_ANNOTATED_CDS"/>
    <property type="molecule type" value="Genomic_DNA"/>
</dbReference>
<dbReference type="EMBL" id="CH471087">
    <property type="protein sequence ID" value="EAW55515.1"/>
    <property type="molecule type" value="Genomic_DNA"/>
</dbReference>
<dbReference type="EMBL" id="BC002649">
    <property type="status" value="NOT_ANNOTATED_CDS"/>
    <property type="molecule type" value="mRNA"/>
</dbReference>
<dbReference type="CCDS" id="CCDS4577.1"/>
<dbReference type="PIR" id="S26364">
    <property type="entry name" value="HSHU11"/>
</dbReference>
<dbReference type="RefSeq" id="NP_005310.1">
    <property type="nucleotide sequence ID" value="NM_005319.4"/>
</dbReference>
<dbReference type="PDB" id="8H0V">
    <property type="method" value="EM"/>
    <property type="resolution" value="3.80 A"/>
    <property type="chains" value="u=1-213"/>
</dbReference>
<dbReference type="PDB" id="8H0W">
    <property type="method" value="EM"/>
    <property type="resolution" value="4.60 A"/>
    <property type="chains" value="u=1-213"/>
</dbReference>
<dbReference type="PDB" id="8KE0">
    <property type="method" value="EM"/>
    <property type="resolution" value="4.00 A"/>
    <property type="chains" value="K=1-213"/>
</dbReference>
<dbReference type="PDBsum" id="8H0V"/>
<dbReference type="PDBsum" id="8H0W"/>
<dbReference type="PDBsum" id="8KE0"/>
<dbReference type="EMDB" id="EMD-34415"/>
<dbReference type="EMDB" id="EMD-34416"/>
<dbReference type="EMDB" id="EMD-37149"/>
<dbReference type="SMR" id="P16403"/>
<dbReference type="BioGRID" id="109261">
    <property type="interactions" value="826"/>
</dbReference>
<dbReference type="DIP" id="DIP-36359N"/>
<dbReference type="FunCoup" id="P16403">
    <property type="interactions" value="1336"/>
</dbReference>
<dbReference type="IntAct" id="P16403">
    <property type="interactions" value="365"/>
</dbReference>
<dbReference type="MINT" id="P16403"/>
<dbReference type="STRING" id="9606.ENSP00000339566"/>
<dbReference type="GlyGen" id="P16403">
    <property type="glycosylation" value="1 site, 1 O-linked glycan (1 site)"/>
</dbReference>
<dbReference type="iPTMnet" id="P16403"/>
<dbReference type="PhosphoSitePlus" id="P16403"/>
<dbReference type="SwissPalm" id="P16403"/>
<dbReference type="BioMuta" id="HIST1H1C"/>
<dbReference type="DMDM" id="417101"/>
<dbReference type="jPOST" id="P16403"/>
<dbReference type="MassIVE" id="P16403"/>
<dbReference type="PaxDb" id="9606-ENSP00000339566"/>
<dbReference type="PeptideAtlas" id="P16403"/>
<dbReference type="PRIDE" id="P16403"/>
<dbReference type="ProteomicsDB" id="53353"/>
<dbReference type="Pumba" id="P16403"/>
<dbReference type="TopDownProteomics" id="P16403"/>
<dbReference type="Antibodypedia" id="25499">
    <property type="antibodies" value="465 antibodies from 32 providers"/>
</dbReference>
<dbReference type="DNASU" id="3006"/>
<dbReference type="Ensembl" id="ENST00000343677.4">
    <property type="protein sequence ID" value="ENSP00000339566.3"/>
    <property type="gene ID" value="ENSG00000187837.5"/>
</dbReference>
<dbReference type="Ensembl" id="ENST00000718281.1">
    <property type="protein sequence ID" value="ENSP00000520720.1"/>
    <property type="gene ID" value="ENSG00000187837.5"/>
</dbReference>
<dbReference type="GeneID" id="3006"/>
<dbReference type="KEGG" id="hsa:3006"/>
<dbReference type="MANE-Select" id="ENST00000343677.4">
    <property type="protein sequence ID" value="ENSP00000339566.3"/>
    <property type="RefSeq nucleotide sequence ID" value="NM_005319.4"/>
    <property type="RefSeq protein sequence ID" value="NP_005310.1"/>
</dbReference>
<dbReference type="UCSC" id="uc003nfw.4">
    <property type="organism name" value="human"/>
</dbReference>
<dbReference type="AGR" id="HGNC:4716"/>
<dbReference type="CTD" id="3006"/>
<dbReference type="DisGeNET" id="3006"/>
<dbReference type="GeneCards" id="H1-2"/>
<dbReference type="HGNC" id="HGNC:4716">
    <property type="gene designation" value="H1-2"/>
</dbReference>
<dbReference type="HPA" id="ENSG00000187837">
    <property type="expression patterns" value="Low tissue specificity"/>
</dbReference>
<dbReference type="MalaCards" id="H1-2"/>
<dbReference type="MIM" id="142710">
    <property type="type" value="gene"/>
</dbReference>
<dbReference type="neXtProt" id="NX_P16403"/>
<dbReference type="OpenTargets" id="ENSG00000187837"/>
<dbReference type="PharmGKB" id="PA29094"/>
<dbReference type="VEuPathDB" id="HostDB:ENSG00000187837"/>
<dbReference type="eggNOG" id="KOG4012">
    <property type="taxonomic scope" value="Eukaryota"/>
</dbReference>
<dbReference type="GeneTree" id="ENSGT00940000163082"/>
<dbReference type="HOGENOM" id="CLU_052897_7_0_1"/>
<dbReference type="InParanoid" id="P16403"/>
<dbReference type="OMA" id="THPSWID"/>
<dbReference type="OrthoDB" id="9486420at2759"/>
<dbReference type="PAN-GO" id="P16403">
    <property type="GO annotations" value="5 GO annotations based on evolutionary models"/>
</dbReference>
<dbReference type="PhylomeDB" id="P16403"/>
<dbReference type="TreeFam" id="TF313664"/>
<dbReference type="PathwayCommons" id="P16403"/>
<dbReference type="Reactome" id="R-HSA-140342">
    <property type="pathway name" value="Apoptosis induced DNA fragmentation"/>
</dbReference>
<dbReference type="Reactome" id="R-HSA-2559584">
    <property type="pathway name" value="Formation of Senescence-Associated Heterochromatin Foci (SAHF)"/>
</dbReference>
<dbReference type="SignaLink" id="P16403"/>
<dbReference type="SIGNOR" id="P16403"/>
<dbReference type="BioGRID-ORCS" id="3006">
    <property type="hits" value="42 hits in 1159 CRISPR screens"/>
</dbReference>
<dbReference type="CD-CODE" id="91857CE7">
    <property type="entry name" value="Nucleolus"/>
</dbReference>
<dbReference type="ChiTaRS" id="HIST1H1C">
    <property type="organism name" value="human"/>
</dbReference>
<dbReference type="GeneWiki" id="HIST1H1C"/>
<dbReference type="GenomeRNAi" id="3006"/>
<dbReference type="Pharos" id="P16403">
    <property type="development level" value="Tbio"/>
</dbReference>
<dbReference type="PRO" id="PR:P16403"/>
<dbReference type="Proteomes" id="UP000005640">
    <property type="component" value="Chromosome 6"/>
</dbReference>
<dbReference type="RNAct" id="P16403">
    <property type="molecule type" value="protein"/>
</dbReference>
<dbReference type="Bgee" id="ENSG00000187837">
    <property type="expression patterns" value="Expressed in calcaneal tendon and 176 other cell types or tissues"/>
</dbReference>
<dbReference type="GO" id="GO:0000791">
    <property type="term" value="C:euchromatin"/>
    <property type="evidence" value="ECO:0000314"/>
    <property type="project" value="UniProtKB"/>
</dbReference>
<dbReference type="GO" id="GO:0000786">
    <property type="term" value="C:nucleosome"/>
    <property type="evidence" value="ECO:0007669"/>
    <property type="project" value="InterPro"/>
</dbReference>
<dbReference type="GO" id="GO:0005634">
    <property type="term" value="C:nucleus"/>
    <property type="evidence" value="ECO:0000314"/>
    <property type="project" value="UniProtKB"/>
</dbReference>
<dbReference type="GO" id="GO:0031490">
    <property type="term" value="F:chromatin DNA binding"/>
    <property type="evidence" value="ECO:0000314"/>
    <property type="project" value="UniProtKB"/>
</dbReference>
<dbReference type="GO" id="GO:0003690">
    <property type="term" value="F:double-stranded DNA binding"/>
    <property type="evidence" value="ECO:0000318"/>
    <property type="project" value="GO_Central"/>
</dbReference>
<dbReference type="GO" id="GO:0061628">
    <property type="term" value="F:histone H3K27me3 reader activity"/>
    <property type="evidence" value="ECO:0000314"/>
    <property type="project" value="GO_Central"/>
</dbReference>
<dbReference type="GO" id="GO:0031492">
    <property type="term" value="F:nucleosomal DNA binding"/>
    <property type="evidence" value="ECO:0000318"/>
    <property type="project" value="GO_Central"/>
</dbReference>
<dbReference type="GO" id="GO:0003723">
    <property type="term" value="F:RNA binding"/>
    <property type="evidence" value="ECO:0007005"/>
    <property type="project" value="UniProtKB"/>
</dbReference>
<dbReference type="GO" id="GO:0030527">
    <property type="term" value="F:structural constituent of chromatin"/>
    <property type="evidence" value="ECO:0007669"/>
    <property type="project" value="Ensembl"/>
</dbReference>
<dbReference type="GO" id="GO:0030261">
    <property type="term" value="P:chromosome condensation"/>
    <property type="evidence" value="ECO:0000318"/>
    <property type="project" value="GO_Central"/>
</dbReference>
<dbReference type="GO" id="GO:0140718">
    <property type="term" value="P:facultative heterochromatin formation"/>
    <property type="evidence" value="ECO:0000314"/>
    <property type="project" value="GO_Central"/>
</dbReference>
<dbReference type="GO" id="GO:0045910">
    <property type="term" value="P:negative regulation of DNA recombination"/>
    <property type="evidence" value="ECO:0000318"/>
    <property type="project" value="GO_Central"/>
</dbReference>
<dbReference type="GO" id="GO:0000122">
    <property type="term" value="P:negative regulation of transcription by RNA polymerase II"/>
    <property type="evidence" value="ECO:0007669"/>
    <property type="project" value="Ensembl"/>
</dbReference>
<dbReference type="GO" id="GO:0006334">
    <property type="term" value="P:nucleosome assembly"/>
    <property type="evidence" value="ECO:0007669"/>
    <property type="project" value="InterPro"/>
</dbReference>
<dbReference type="CDD" id="cd00073">
    <property type="entry name" value="H15"/>
    <property type="match status" value="1"/>
</dbReference>
<dbReference type="FunFam" id="1.10.10.10:FF:000075">
    <property type="entry name" value="Histone H1 like"/>
    <property type="match status" value="1"/>
</dbReference>
<dbReference type="Gene3D" id="1.10.10.10">
    <property type="entry name" value="Winged helix-like DNA-binding domain superfamily/Winged helix DNA-binding domain"/>
    <property type="match status" value="1"/>
</dbReference>
<dbReference type="InterPro" id="IPR005819">
    <property type="entry name" value="H1/H5"/>
</dbReference>
<dbReference type="InterPro" id="IPR005818">
    <property type="entry name" value="Histone_H1/H5_H15"/>
</dbReference>
<dbReference type="InterPro" id="IPR036388">
    <property type="entry name" value="WH-like_DNA-bd_sf"/>
</dbReference>
<dbReference type="InterPro" id="IPR036390">
    <property type="entry name" value="WH_DNA-bd_sf"/>
</dbReference>
<dbReference type="Pfam" id="PF00538">
    <property type="entry name" value="Linker_histone"/>
    <property type="match status" value="1"/>
</dbReference>
<dbReference type="PRINTS" id="PR00624">
    <property type="entry name" value="HISTONEH5"/>
</dbReference>
<dbReference type="SMART" id="SM00526">
    <property type="entry name" value="H15"/>
    <property type="match status" value="1"/>
</dbReference>
<dbReference type="SUPFAM" id="SSF46785">
    <property type="entry name" value="Winged helix' DNA-binding domain"/>
    <property type="match status" value="1"/>
</dbReference>
<dbReference type="PROSITE" id="PS51504">
    <property type="entry name" value="H15"/>
    <property type="match status" value="1"/>
</dbReference>
<accession>P16403</accession>
<accession>A8K4I2</accession>
<reference key="1">
    <citation type="journal article" date="1989" name="Eur. J. Cell Biol.">
        <title>Human H1 histones: conserved and varied sequence elements in two H1 subtype genes.</title>
        <authorList>
            <person name="Eick S."/>
            <person name="Nicolai M."/>
            <person name="Mumberg D."/>
            <person name="Doenecke D."/>
        </authorList>
    </citation>
    <scope>NUCLEOTIDE SEQUENCE [GENOMIC DNA]</scope>
</reference>
<reference key="2">
    <citation type="journal article" date="2002" name="Genomics">
        <title>The human and mouse replication-dependent histone genes.</title>
        <authorList>
            <person name="Marzluff W.F."/>
            <person name="Gongidi P."/>
            <person name="Woods K.R."/>
            <person name="Jin J."/>
            <person name="Maltais L.J."/>
        </authorList>
    </citation>
    <scope>NUCLEOTIDE SEQUENCE [GENOMIC DNA]</scope>
</reference>
<reference key="3">
    <citation type="journal article" date="2004" name="Nat. Genet.">
        <title>Complete sequencing and characterization of 21,243 full-length human cDNAs.</title>
        <authorList>
            <person name="Ota T."/>
            <person name="Suzuki Y."/>
            <person name="Nishikawa T."/>
            <person name="Otsuki T."/>
            <person name="Sugiyama T."/>
            <person name="Irie R."/>
            <person name="Wakamatsu A."/>
            <person name="Hayashi K."/>
            <person name="Sato H."/>
            <person name="Nagai K."/>
            <person name="Kimura K."/>
            <person name="Makita H."/>
            <person name="Sekine M."/>
            <person name="Obayashi M."/>
            <person name="Nishi T."/>
            <person name="Shibahara T."/>
            <person name="Tanaka T."/>
            <person name="Ishii S."/>
            <person name="Yamamoto J."/>
            <person name="Saito K."/>
            <person name="Kawai Y."/>
            <person name="Isono Y."/>
            <person name="Nakamura Y."/>
            <person name="Nagahari K."/>
            <person name="Murakami K."/>
            <person name="Yasuda T."/>
            <person name="Iwayanagi T."/>
            <person name="Wagatsuma M."/>
            <person name="Shiratori A."/>
            <person name="Sudo H."/>
            <person name="Hosoiri T."/>
            <person name="Kaku Y."/>
            <person name="Kodaira H."/>
            <person name="Kondo H."/>
            <person name="Sugawara M."/>
            <person name="Takahashi M."/>
            <person name="Kanda K."/>
            <person name="Yokoi T."/>
            <person name="Furuya T."/>
            <person name="Kikkawa E."/>
            <person name="Omura Y."/>
            <person name="Abe K."/>
            <person name="Kamihara K."/>
            <person name="Katsuta N."/>
            <person name="Sato K."/>
            <person name="Tanikawa M."/>
            <person name="Yamazaki M."/>
            <person name="Ninomiya K."/>
            <person name="Ishibashi T."/>
            <person name="Yamashita H."/>
            <person name="Murakawa K."/>
            <person name="Fujimori K."/>
            <person name="Tanai H."/>
            <person name="Kimata M."/>
            <person name="Watanabe M."/>
            <person name="Hiraoka S."/>
            <person name="Chiba Y."/>
            <person name="Ishida S."/>
            <person name="Ono Y."/>
            <person name="Takiguchi S."/>
            <person name="Watanabe S."/>
            <person name="Yosida M."/>
            <person name="Hotuta T."/>
            <person name="Kusano J."/>
            <person name="Kanehori K."/>
            <person name="Takahashi-Fujii A."/>
            <person name="Hara H."/>
            <person name="Tanase T.-O."/>
            <person name="Nomura Y."/>
            <person name="Togiya S."/>
            <person name="Komai F."/>
            <person name="Hara R."/>
            <person name="Takeuchi K."/>
            <person name="Arita M."/>
            <person name="Imose N."/>
            <person name="Musashino K."/>
            <person name="Yuuki H."/>
            <person name="Oshima A."/>
            <person name="Sasaki N."/>
            <person name="Aotsuka S."/>
            <person name="Yoshikawa Y."/>
            <person name="Matsunawa H."/>
            <person name="Ichihara T."/>
            <person name="Shiohata N."/>
            <person name="Sano S."/>
            <person name="Moriya S."/>
            <person name="Momiyama H."/>
            <person name="Satoh N."/>
            <person name="Takami S."/>
            <person name="Terashima Y."/>
            <person name="Suzuki O."/>
            <person name="Nakagawa S."/>
            <person name="Senoh A."/>
            <person name="Mizoguchi H."/>
            <person name="Goto Y."/>
            <person name="Shimizu F."/>
            <person name="Wakebe H."/>
            <person name="Hishigaki H."/>
            <person name="Watanabe T."/>
            <person name="Sugiyama A."/>
            <person name="Takemoto M."/>
            <person name="Kawakami B."/>
            <person name="Yamazaki M."/>
            <person name="Watanabe K."/>
            <person name="Kumagai A."/>
            <person name="Itakura S."/>
            <person name="Fukuzumi Y."/>
            <person name="Fujimori Y."/>
            <person name="Komiyama M."/>
            <person name="Tashiro H."/>
            <person name="Tanigami A."/>
            <person name="Fujiwara T."/>
            <person name="Ono T."/>
            <person name="Yamada K."/>
            <person name="Fujii Y."/>
            <person name="Ozaki K."/>
            <person name="Hirao M."/>
            <person name="Ohmori Y."/>
            <person name="Kawabata A."/>
            <person name="Hikiji T."/>
            <person name="Kobatake N."/>
            <person name="Inagaki H."/>
            <person name="Ikema Y."/>
            <person name="Okamoto S."/>
            <person name="Okitani R."/>
            <person name="Kawakami T."/>
            <person name="Noguchi S."/>
            <person name="Itoh T."/>
            <person name="Shigeta K."/>
            <person name="Senba T."/>
            <person name="Matsumura K."/>
            <person name="Nakajima Y."/>
            <person name="Mizuno T."/>
            <person name="Morinaga M."/>
            <person name="Sasaki M."/>
            <person name="Togashi T."/>
            <person name="Oyama M."/>
            <person name="Hata H."/>
            <person name="Watanabe M."/>
            <person name="Komatsu T."/>
            <person name="Mizushima-Sugano J."/>
            <person name="Satoh T."/>
            <person name="Shirai Y."/>
            <person name="Takahashi Y."/>
            <person name="Nakagawa K."/>
            <person name="Okumura K."/>
            <person name="Nagase T."/>
            <person name="Nomura N."/>
            <person name="Kikuchi H."/>
            <person name="Masuho Y."/>
            <person name="Yamashita R."/>
            <person name="Nakai K."/>
            <person name="Yada T."/>
            <person name="Nakamura Y."/>
            <person name="Ohara O."/>
            <person name="Isogai T."/>
            <person name="Sugano S."/>
        </authorList>
    </citation>
    <scope>NUCLEOTIDE SEQUENCE [LARGE SCALE MRNA]</scope>
</reference>
<reference key="4">
    <citation type="journal article" date="2008" name="Nat. Methods">
        <title>Human protein factory for converting the transcriptome into an in vitro-expressed proteome.</title>
        <authorList>
            <person name="Goshima N."/>
            <person name="Kawamura Y."/>
            <person name="Fukumoto A."/>
            <person name="Miura A."/>
            <person name="Honma R."/>
            <person name="Satoh R."/>
            <person name="Wakamatsu A."/>
            <person name="Yamamoto J."/>
            <person name="Kimura K."/>
            <person name="Nishikawa T."/>
            <person name="Andoh T."/>
            <person name="Iida Y."/>
            <person name="Ishikawa K."/>
            <person name="Ito E."/>
            <person name="Kagawa N."/>
            <person name="Kaminaga C."/>
            <person name="Kanehori K."/>
            <person name="Kawakami B."/>
            <person name="Kenmochi K."/>
            <person name="Kimura R."/>
            <person name="Kobayashi M."/>
            <person name="Kuroita T."/>
            <person name="Kuwayama H."/>
            <person name="Maruyama Y."/>
            <person name="Matsuo K."/>
            <person name="Minami K."/>
            <person name="Mitsubori M."/>
            <person name="Mori M."/>
            <person name="Morishita R."/>
            <person name="Murase A."/>
            <person name="Nishikawa A."/>
            <person name="Nishikawa S."/>
            <person name="Okamoto T."/>
            <person name="Sakagami N."/>
            <person name="Sakamoto Y."/>
            <person name="Sasaki Y."/>
            <person name="Seki T."/>
            <person name="Sono S."/>
            <person name="Sugiyama A."/>
            <person name="Sumiya T."/>
            <person name="Takayama T."/>
            <person name="Takayama Y."/>
            <person name="Takeda H."/>
            <person name="Togashi T."/>
            <person name="Yahata K."/>
            <person name="Yamada H."/>
            <person name="Yanagisawa Y."/>
            <person name="Endo Y."/>
            <person name="Imamoto F."/>
            <person name="Kisu Y."/>
            <person name="Tanaka S."/>
            <person name="Isogai T."/>
            <person name="Imai J."/>
            <person name="Watanabe S."/>
            <person name="Nomura N."/>
        </authorList>
    </citation>
    <scope>NUCLEOTIDE SEQUENCE [LARGE SCALE MRNA]</scope>
</reference>
<reference key="5">
    <citation type="journal article" date="2003" name="Nature">
        <title>The DNA sequence and analysis of human chromosome 6.</title>
        <authorList>
            <person name="Mungall A.J."/>
            <person name="Palmer S.A."/>
            <person name="Sims S.K."/>
            <person name="Edwards C.A."/>
            <person name="Ashurst J.L."/>
            <person name="Wilming L."/>
            <person name="Jones M.C."/>
            <person name="Horton R."/>
            <person name="Hunt S.E."/>
            <person name="Scott C.E."/>
            <person name="Gilbert J.G.R."/>
            <person name="Clamp M.E."/>
            <person name="Bethel G."/>
            <person name="Milne S."/>
            <person name="Ainscough R."/>
            <person name="Almeida J.P."/>
            <person name="Ambrose K.D."/>
            <person name="Andrews T.D."/>
            <person name="Ashwell R.I.S."/>
            <person name="Babbage A.K."/>
            <person name="Bagguley C.L."/>
            <person name="Bailey J."/>
            <person name="Banerjee R."/>
            <person name="Barker D.J."/>
            <person name="Barlow K.F."/>
            <person name="Bates K."/>
            <person name="Beare D.M."/>
            <person name="Beasley H."/>
            <person name="Beasley O."/>
            <person name="Bird C.P."/>
            <person name="Blakey S.E."/>
            <person name="Bray-Allen S."/>
            <person name="Brook J."/>
            <person name="Brown A.J."/>
            <person name="Brown J.Y."/>
            <person name="Burford D.C."/>
            <person name="Burrill W."/>
            <person name="Burton J."/>
            <person name="Carder C."/>
            <person name="Carter N.P."/>
            <person name="Chapman J.C."/>
            <person name="Clark S.Y."/>
            <person name="Clark G."/>
            <person name="Clee C.M."/>
            <person name="Clegg S."/>
            <person name="Cobley V."/>
            <person name="Collier R.E."/>
            <person name="Collins J.E."/>
            <person name="Colman L.K."/>
            <person name="Corby N.R."/>
            <person name="Coville G.J."/>
            <person name="Culley K.M."/>
            <person name="Dhami P."/>
            <person name="Davies J."/>
            <person name="Dunn M."/>
            <person name="Earthrowl M.E."/>
            <person name="Ellington A.E."/>
            <person name="Evans K.A."/>
            <person name="Faulkner L."/>
            <person name="Francis M.D."/>
            <person name="Frankish A."/>
            <person name="Frankland J."/>
            <person name="French L."/>
            <person name="Garner P."/>
            <person name="Garnett J."/>
            <person name="Ghori M.J."/>
            <person name="Gilby L.M."/>
            <person name="Gillson C.J."/>
            <person name="Glithero R.J."/>
            <person name="Grafham D.V."/>
            <person name="Grant M."/>
            <person name="Gribble S."/>
            <person name="Griffiths C."/>
            <person name="Griffiths M.N.D."/>
            <person name="Hall R."/>
            <person name="Halls K.S."/>
            <person name="Hammond S."/>
            <person name="Harley J.L."/>
            <person name="Hart E.A."/>
            <person name="Heath P.D."/>
            <person name="Heathcott R."/>
            <person name="Holmes S.J."/>
            <person name="Howden P.J."/>
            <person name="Howe K.L."/>
            <person name="Howell G.R."/>
            <person name="Huckle E."/>
            <person name="Humphray S.J."/>
            <person name="Humphries M.D."/>
            <person name="Hunt A.R."/>
            <person name="Johnson C.M."/>
            <person name="Joy A.A."/>
            <person name="Kay M."/>
            <person name="Keenan S.J."/>
            <person name="Kimberley A.M."/>
            <person name="King A."/>
            <person name="Laird G.K."/>
            <person name="Langford C."/>
            <person name="Lawlor S."/>
            <person name="Leongamornlert D.A."/>
            <person name="Leversha M."/>
            <person name="Lloyd C.R."/>
            <person name="Lloyd D.M."/>
            <person name="Loveland J.E."/>
            <person name="Lovell J."/>
            <person name="Martin S."/>
            <person name="Mashreghi-Mohammadi M."/>
            <person name="Maslen G.L."/>
            <person name="Matthews L."/>
            <person name="McCann O.T."/>
            <person name="McLaren S.J."/>
            <person name="McLay K."/>
            <person name="McMurray A."/>
            <person name="Moore M.J.F."/>
            <person name="Mullikin J.C."/>
            <person name="Niblett D."/>
            <person name="Nickerson T."/>
            <person name="Novik K.L."/>
            <person name="Oliver K."/>
            <person name="Overton-Larty E.K."/>
            <person name="Parker A."/>
            <person name="Patel R."/>
            <person name="Pearce A.V."/>
            <person name="Peck A.I."/>
            <person name="Phillimore B.J.C.T."/>
            <person name="Phillips S."/>
            <person name="Plumb R.W."/>
            <person name="Porter K.M."/>
            <person name="Ramsey Y."/>
            <person name="Ranby S.A."/>
            <person name="Rice C.M."/>
            <person name="Ross M.T."/>
            <person name="Searle S.M."/>
            <person name="Sehra H.K."/>
            <person name="Sheridan E."/>
            <person name="Skuce C.D."/>
            <person name="Smith S."/>
            <person name="Smith M."/>
            <person name="Spraggon L."/>
            <person name="Squares S.L."/>
            <person name="Steward C.A."/>
            <person name="Sycamore N."/>
            <person name="Tamlyn-Hall G."/>
            <person name="Tester J."/>
            <person name="Theaker A.J."/>
            <person name="Thomas D.W."/>
            <person name="Thorpe A."/>
            <person name="Tracey A."/>
            <person name="Tromans A."/>
            <person name="Tubby B."/>
            <person name="Wall M."/>
            <person name="Wallis J.M."/>
            <person name="West A.P."/>
            <person name="White S.S."/>
            <person name="Whitehead S.L."/>
            <person name="Whittaker H."/>
            <person name="Wild A."/>
            <person name="Willey D.J."/>
            <person name="Wilmer T.E."/>
            <person name="Wood J.M."/>
            <person name="Wray P.W."/>
            <person name="Wyatt J.C."/>
            <person name="Young L."/>
            <person name="Younger R.M."/>
            <person name="Bentley D.R."/>
            <person name="Coulson A."/>
            <person name="Durbin R.M."/>
            <person name="Hubbard T."/>
            <person name="Sulston J.E."/>
            <person name="Dunham I."/>
            <person name="Rogers J."/>
            <person name="Beck S."/>
        </authorList>
    </citation>
    <scope>NUCLEOTIDE SEQUENCE [LARGE SCALE GENOMIC DNA]</scope>
</reference>
<reference key="6">
    <citation type="submission" date="2005-07" db="EMBL/GenBank/DDBJ databases">
        <authorList>
            <person name="Mural R.J."/>
            <person name="Istrail S."/>
            <person name="Sutton G.G."/>
            <person name="Florea L."/>
            <person name="Halpern A.L."/>
            <person name="Mobarry C.M."/>
            <person name="Lippert R."/>
            <person name="Walenz B."/>
            <person name="Shatkay H."/>
            <person name="Dew I."/>
            <person name="Miller J.R."/>
            <person name="Flanigan M.J."/>
            <person name="Edwards N.J."/>
            <person name="Bolanos R."/>
            <person name="Fasulo D."/>
            <person name="Halldorsson B.V."/>
            <person name="Hannenhalli S."/>
            <person name="Turner R."/>
            <person name="Yooseph S."/>
            <person name="Lu F."/>
            <person name="Nusskern D.R."/>
            <person name="Shue B.C."/>
            <person name="Zheng X.H."/>
            <person name="Zhong F."/>
            <person name="Delcher A.L."/>
            <person name="Huson D.H."/>
            <person name="Kravitz S.A."/>
            <person name="Mouchard L."/>
            <person name="Reinert K."/>
            <person name="Remington K.A."/>
            <person name="Clark A.G."/>
            <person name="Waterman M.S."/>
            <person name="Eichler E.E."/>
            <person name="Adams M.D."/>
            <person name="Hunkapiller M.W."/>
            <person name="Myers E.W."/>
            <person name="Venter J.C."/>
        </authorList>
    </citation>
    <scope>NUCLEOTIDE SEQUENCE [LARGE SCALE GENOMIC DNA]</scope>
</reference>
<reference key="7">
    <citation type="journal article" date="2004" name="Genome Res.">
        <title>The status, quality, and expansion of the NIH full-length cDNA project: the Mammalian Gene Collection (MGC).</title>
        <authorList>
            <consortium name="The MGC Project Team"/>
        </authorList>
    </citation>
    <scope>NUCLEOTIDE SEQUENCE [LARGE SCALE MRNA]</scope>
    <source>
        <tissue>Uterus</tissue>
    </source>
</reference>
<reference key="8">
    <citation type="journal article" date="1989" name="J. Biochem.">
        <title>Human spleen histone H1. Isolation and amino acid sequences of three minor variants, H1a, H1c, and H1d.</title>
        <authorList>
            <person name="Ohe Y."/>
            <person name="Hayashi H."/>
            <person name="Iwai K."/>
        </authorList>
    </citation>
    <scope>PROTEIN SEQUENCE OF 2-213</scope>
    <source>
        <tissue>Spleen</tissue>
    </source>
</reference>
<reference key="9">
    <citation type="submission" date="2008-12" db="UniProtKB">
        <authorList>
            <person name="Bienvenut W.V."/>
            <person name="Lilla S."/>
            <person name="von Kriegsheim A."/>
            <person name="Lempens A."/>
            <person name="Kolch W."/>
        </authorList>
    </citation>
    <scope>PROTEIN SEQUENCE OF 2-17; 34-46; 55-75 AND 86-97</scope>
    <scope>CLEAVAGE OF INITIATOR METHIONINE</scope>
    <scope>ACETYLATION AT SER-2</scope>
    <scope>METHYLATION AT LYS-34</scope>
    <scope>IDENTIFICATION BY MASS SPECTROMETRY</scope>
    <source>
        <tissue>Ovarian carcinoma</tissue>
    </source>
</reference>
<reference key="10">
    <citation type="submission" date="2009-03" db="UniProtKB">
        <authorList>
            <person name="Bienvenut W.V."/>
            <person name="Waridel P."/>
            <person name="Quadroni M."/>
        </authorList>
    </citation>
    <scope>PROTEIN SEQUENCE OF 2-17; 34-46; 55-63 AND 65-75</scope>
    <scope>CLEAVAGE OF INITIATOR METHIONINE</scope>
    <scope>ACETYLATION AT SER-2</scope>
    <scope>IDENTIFICATION BY MASS SPECTROMETRY</scope>
    <source>
        <tissue>Cervix carcinoma</tissue>
    </source>
</reference>
<reference key="11">
    <citation type="journal article" date="1994" name="Protein Sci.">
        <title>A proposal for a coherent mammalian histone H1 nomenclature correlated with amino acid sequences.</title>
        <authorList>
            <person name="Parseghian M.H."/>
            <person name="Henschen A.H."/>
            <person name="Krieglstein K.G."/>
            <person name="Hamkalo B.A."/>
        </authorList>
    </citation>
    <scope>NOMENCLATURE</scope>
</reference>
<reference key="12">
    <citation type="journal article" date="2000" name="Chromosome Res.">
        <title>The distribution of somatic H1 subtypes is non-random on active vs. inactive chromatin: distribution in human fetal fibroblasts.</title>
        <authorList>
            <person name="Parseghian M.H."/>
            <person name="Newcomb R.L."/>
            <person name="Winokur S.T."/>
            <person name="Hamkalo B.A."/>
        </authorList>
    </citation>
    <scope>SUBCELLULAR LOCATION</scope>
</reference>
<reference key="13">
    <citation type="journal article" date="2005" name="J. Biol. Chem.">
        <title>H1 family histones in the nucleus. Control of binding and localization by the C-terminal domain.</title>
        <authorList>
            <person name="Th'ng J.P."/>
            <person name="Sung R."/>
            <person name="Ye M."/>
            <person name="Hendzel M.J."/>
        </authorList>
    </citation>
    <scope>SUBCELLULAR LOCATION</scope>
</reference>
<reference key="14">
    <citation type="journal article" date="2006" name="Cell">
        <title>Global, in vivo, and site-specific phosphorylation dynamics in signaling networks.</title>
        <authorList>
            <person name="Olsen J.V."/>
            <person name="Blagoev B."/>
            <person name="Gnad F."/>
            <person name="Macek B."/>
            <person name="Kumar C."/>
            <person name="Mortensen P."/>
            <person name="Mann M."/>
        </authorList>
    </citation>
    <scope>IDENTIFICATION BY MASS SPECTROMETRY [LARGE SCALE ANALYSIS]</scope>
    <source>
        <tissue>Cervix carcinoma</tissue>
    </source>
</reference>
<reference key="15">
    <citation type="journal article" date="2008" name="Proc. Natl. Acad. Sci. U.S.A.">
        <title>A quantitative atlas of mitotic phosphorylation.</title>
        <authorList>
            <person name="Dephoure N."/>
            <person name="Zhou C."/>
            <person name="Villen J."/>
            <person name="Beausoleil S.A."/>
            <person name="Bakalarski C.E."/>
            <person name="Elledge S.J."/>
            <person name="Gygi S.P."/>
        </authorList>
    </citation>
    <scope>IDENTIFICATION BY MASS SPECTROMETRY [LARGE SCALE ANALYSIS]</scope>
    <source>
        <tissue>Cervix carcinoma</tissue>
    </source>
</reference>
<reference key="16">
    <citation type="journal article" date="2009" name="Anal. Chem.">
        <title>Lys-N and trypsin cover complementary parts of the phosphoproteome in a refined SCX-based approach.</title>
        <authorList>
            <person name="Gauci S."/>
            <person name="Helbig A.O."/>
            <person name="Slijper M."/>
            <person name="Krijgsveld J."/>
            <person name="Heck A.J."/>
            <person name="Mohammed S."/>
        </authorList>
    </citation>
    <scope>ACETYLATION [LARGE SCALE ANALYSIS] AT SER-2</scope>
    <scope>CLEAVAGE OF INITIATOR METHIONINE [LARGE SCALE ANALYSIS]</scope>
    <scope>IDENTIFICATION BY MASS SPECTROMETRY [LARGE SCALE ANALYSIS]</scope>
</reference>
<reference key="17">
    <citation type="journal article" date="2010" name="Epigenetics Chromatin">
        <title>Histone H1 variant-specific lysine methylation by G9a/KMT1C and Glp1/KMT1D.</title>
        <authorList>
            <person name="Weiss T."/>
            <person name="Hergeth S."/>
            <person name="Zeissler U."/>
            <person name="Izzo A."/>
            <person name="Tropberger P."/>
            <person name="Zee B.M."/>
            <person name="Dundr M."/>
            <person name="Garcia B.A."/>
            <person name="Daujat S."/>
            <person name="Schneider R."/>
        </authorList>
    </citation>
    <scope>METHYLATION AT LYS-187 BY EHMT1 AND EHMT2</scope>
    <scope>MUTAGENESIS OF LYS-187</scope>
    <scope>IDENTIFICATION BY MASS SPECTROMETRY</scope>
</reference>
<reference key="18">
    <citation type="journal article" date="2010" name="Sci. Signal.">
        <title>Quantitative phosphoproteomics reveals widespread full phosphorylation site occupancy during mitosis.</title>
        <authorList>
            <person name="Olsen J.V."/>
            <person name="Vermeulen M."/>
            <person name="Santamaria A."/>
            <person name="Kumar C."/>
            <person name="Miller M.L."/>
            <person name="Jensen L.J."/>
            <person name="Gnad F."/>
            <person name="Cox J."/>
            <person name="Jensen T.S."/>
            <person name="Nigg E.A."/>
            <person name="Brunak S."/>
            <person name="Mann M."/>
        </authorList>
    </citation>
    <scope>ACETYLATION [LARGE SCALE ANALYSIS] AT SER-2</scope>
    <scope>PHOSPHORYLATION [LARGE SCALE ANALYSIS] AT SER-2 AND THR-146</scope>
    <scope>CLEAVAGE OF INITIATOR METHIONINE [LARGE SCALE ANALYSIS]</scope>
    <scope>IDENTIFICATION BY MASS SPECTROMETRY [LARGE SCALE ANALYSIS]</scope>
    <source>
        <tissue>Cervix carcinoma</tissue>
    </source>
</reference>
<reference key="19">
    <citation type="journal article" date="2011" name="BMC Syst. Biol.">
        <title>Initial characterization of the human central proteome.</title>
        <authorList>
            <person name="Burkard T.R."/>
            <person name="Planyavsky M."/>
            <person name="Kaupe I."/>
            <person name="Breitwieser F.P."/>
            <person name="Buerckstuemmer T."/>
            <person name="Bennett K.L."/>
            <person name="Superti-Furga G."/>
            <person name="Colinge J."/>
        </authorList>
    </citation>
    <scope>IDENTIFICATION BY MASS SPECTROMETRY [LARGE SCALE ANALYSIS]</scope>
</reference>
<reference key="20">
    <citation type="journal article" date="2011" name="Cell">
        <title>Identification of 67 histone marks and histone lysine crotonylation as a new type of histone modification.</title>
        <authorList>
            <person name="Tan M."/>
            <person name="Luo H."/>
            <person name="Lee S."/>
            <person name="Jin F."/>
            <person name="Yang J.S."/>
            <person name="Montellier E."/>
            <person name="Buchou T."/>
            <person name="Cheng Z."/>
            <person name="Rousseaux S."/>
            <person name="Rajagopal N."/>
            <person name="Lu Z."/>
            <person name="Ye Z."/>
            <person name="Zhu Q."/>
            <person name="Wysocka J."/>
            <person name="Ye Y."/>
            <person name="Khochbin S."/>
            <person name="Ren B."/>
            <person name="Zhao Y."/>
        </authorList>
    </citation>
    <scope>CROTONYLATION AT LYS-34; LYS-64; LYS-85; LYS-90; LYS-97; LYS-159 AND LYS-168</scope>
</reference>
<reference key="21">
    <citation type="journal article" date="2011" name="Sci. Signal.">
        <title>System-wide temporal characterization of the proteome and phosphoproteome of human embryonic stem cell differentiation.</title>
        <authorList>
            <person name="Rigbolt K.T."/>
            <person name="Prokhorova T.A."/>
            <person name="Akimov V."/>
            <person name="Henningsen J."/>
            <person name="Johansen P.T."/>
            <person name="Kratchmarova I."/>
            <person name="Kassem M."/>
            <person name="Mann M."/>
            <person name="Olsen J.V."/>
            <person name="Blagoev B."/>
        </authorList>
    </citation>
    <scope>ACETYLATION [LARGE SCALE ANALYSIS] AT SER-2</scope>
    <scope>PHOSPHORYLATION [LARGE SCALE ANALYSIS] AT SER-2</scope>
    <scope>CLEAVAGE OF INITIATOR METHIONINE [LARGE SCALE ANALYSIS]</scope>
    <scope>IDENTIFICATION BY MASS SPECTROMETRY [LARGE SCALE ANALYSIS]</scope>
</reference>
<reference key="22">
    <citation type="journal article" date="2012" name="Mol. Cell. Proteomics">
        <title>Comparative large-scale characterisation of plant vs. mammal proteins reveals similar and idiosyncratic N-alpha acetylation features.</title>
        <authorList>
            <person name="Bienvenut W.V."/>
            <person name="Sumpton D."/>
            <person name="Martinez A."/>
            <person name="Lilla S."/>
            <person name="Espagne C."/>
            <person name="Meinnel T."/>
            <person name="Giglione C."/>
        </authorList>
    </citation>
    <scope>ACETYLATION [LARGE SCALE ANALYSIS] AT SER-2</scope>
    <scope>CLEAVAGE OF INITIATOR METHIONINE [LARGE SCALE ANALYSIS]</scope>
    <scope>IDENTIFICATION BY MASS SPECTROMETRY [LARGE SCALE ANALYSIS]</scope>
</reference>
<reference key="23">
    <citation type="journal article" date="2012" name="Proc. Natl. Acad. Sci. U.S.A.">
        <title>N-terminal acetylome analyses and functional insights of the N-terminal acetyltransferase NatB.</title>
        <authorList>
            <person name="Van Damme P."/>
            <person name="Lasa M."/>
            <person name="Polevoda B."/>
            <person name="Gazquez C."/>
            <person name="Elosegui-Artola A."/>
            <person name="Kim D.S."/>
            <person name="De Juan-Pardo E."/>
            <person name="Demeyer K."/>
            <person name="Hole K."/>
            <person name="Larrea E."/>
            <person name="Timmerman E."/>
            <person name="Prieto J."/>
            <person name="Arnesen T."/>
            <person name="Sherman F."/>
            <person name="Gevaert K."/>
            <person name="Aldabe R."/>
        </authorList>
    </citation>
    <scope>ACETYLATION [LARGE SCALE ANALYSIS] AT SER-2</scope>
    <scope>CLEAVAGE OF INITIATOR METHIONINE [LARGE SCALE ANALYSIS]</scope>
    <scope>IDENTIFICATION BY MASS SPECTROMETRY [LARGE SCALE ANALYSIS]</scope>
</reference>
<reference key="24">
    <citation type="journal article" date="2013" name="J. Proteome Res.">
        <title>Toward a comprehensive characterization of a human cancer cell phosphoproteome.</title>
        <authorList>
            <person name="Zhou H."/>
            <person name="Di Palma S."/>
            <person name="Preisinger C."/>
            <person name="Peng M."/>
            <person name="Polat A.N."/>
            <person name="Heck A.J."/>
            <person name="Mohammed S."/>
        </authorList>
    </citation>
    <scope>IDENTIFICATION BY MASS SPECTROMETRY [LARGE SCALE ANALYSIS]</scope>
    <source>
        <tissue>Cervix carcinoma</tissue>
    </source>
</reference>
<reference key="25">
    <citation type="journal article" date="2014" name="Nat. Chem. Biol.">
        <title>Lysine 2-hydroxyisobutyrylation is a widely distributed active histone mark.</title>
        <authorList>
            <person name="Dai L."/>
            <person name="Peng C."/>
            <person name="Montellier E."/>
            <person name="Lu Z."/>
            <person name="Chen Y."/>
            <person name="Ishii H."/>
            <person name="Debernardi A."/>
            <person name="Buchou T."/>
            <person name="Rousseaux S."/>
            <person name="Jin F."/>
            <person name="Sabari B.R."/>
            <person name="Deng Z."/>
            <person name="Allis C.D."/>
            <person name="Ren B."/>
            <person name="Khochbin S."/>
            <person name="Zhao Y."/>
        </authorList>
    </citation>
    <scope>HYDROXYBUTYRYLATION AT LYS-23; LYS-26; LYS-27; LYS-46; LYS-52; LYS-63; LYS-64; LYS-75; LYS-81; LYS-85; LYS-90; LYS-97; LYS-110; LYS-117; LYS-121; LYS-129; LYS-136; LYS-148; LYS-159; LYS-168 AND LYS-213</scope>
</reference>
<reference key="26">
    <citation type="journal article" date="2015" name="Proteomics">
        <title>N-terminome analysis of the human mitochondrial proteome.</title>
        <authorList>
            <person name="Vaca Jacome A.S."/>
            <person name="Rabilloud T."/>
            <person name="Schaeffer-Reiss C."/>
            <person name="Rompais M."/>
            <person name="Ayoub D."/>
            <person name="Lane L."/>
            <person name="Bairoch A."/>
            <person name="Van Dorsselaer A."/>
            <person name="Carapito C."/>
        </authorList>
    </citation>
    <scope>ACETYLATION [LARGE SCALE ANALYSIS] AT SER-2</scope>
    <scope>CLEAVAGE OF INITIATOR METHIONINE [LARGE SCALE ANALYSIS]</scope>
    <scope>IDENTIFICATION BY MASS SPECTROMETRY [LARGE SCALE ANALYSIS]</scope>
</reference>
<reference key="27">
    <citation type="journal article" date="2016" name="Nat. Chem. Biol.">
        <title>Serine is a new target residue for endogenous ADP-ribosylation on histones.</title>
        <authorList>
            <person name="Leidecker O."/>
            <person name="Bonfiglio J.J."/>
            <person name="Colby T."/>
            <person name="Zhang Q."/>
            <person name="Atanassov I."/>
            <person name="Zaja R."/>
            <person name="Palazzo L."/>
            <person name="Stockum A."/>
            <person name="Ahel I."/>
            <person name="Matic I."/>
        </authorList>
    </citation>
    <scope>ADP-RIBOSYLATION AT SER-188</scope>
</reference>
<reference key="28">
    <citation type="journal article" date="2021" name="Int. J. Mol. Sci.">
        <title>Identification of Binding Proteins for TSC22D1 Family Proteins Using Mass Spectrometry.</title>
        <authorList>
            <person name="Kamimura R."/>
            <person name="Uchida D."/>
            <person name="Kanno S.I."/>
            <person name="Shiraishi R."/>
            <person name="Hyodo T."/>
            <person name="Sawatani Y."/>
            <person name="Shimura M."/>
            <person name="Hasegawa T."/>
            <person name="Tsubura-Okubo M."/>
            <person name="Yaguchi E."/>
            <person name="Komiyama Y."/>
            <person name="Fukumoto C."/>
            <person name="Izumi S."/>
            <person name="Fujita A."/>
            <person name="Wakui T."/>
            <person name="Kawamata H."/>
        </authorList>
    </citation>
    <scope>INTERACTION WITH TSC22D1 ISOFORMS 2 AND 5</scope>
</reference>
<protein>
    <recommendedName>
        <fullName>Histone H1.2</fullName>
    </recommendedName>
    <alternativeName>
        <fullName>Histone H1c</fullName>
    </alternativeName>
    <alternativeName>
        <fullName>Histone H1d</fullName>
    </alternativeName>
    <alternativeName>
        <fullName>Histone H1s-1</fullName>
    </alternativeName>
</protein>
<gene>
    <name evidence="15" type="primary">H1-2</name>
    <name evidence="15" type="synonym">H1F2</name>
    <name evidence="15" type="synonym">HIST1H1C</name>
</gene>
<sequence length="213" mass="21365">MSETAPAAPAAAPPAEKAPVKKKAAKKAGGTPRKASGPPVSELITKAVAASKERSGVSLAALKKALAAAGYDVEKNNSRIKLGLKSLVSKGTLVQTKGTGASGSFKLNKKAASGEAKPKVKKAGGTKPKKPVGAAKKPKKAAGGATPKKSAKKTPKKAKKPAAATVTKKVAKSPKKAKVAKPKKAAKSAAKAVKPKAAKPKVVKPKKAAPKKK</sequence>
<keyword id="KW-0002">3D-structure</keyword>
<keyword id="KW-0007">Acetylation</keyword>
<keyword id="KW-0013">ADP-ribosylation</keyword>
<keyword id="KW-0158">Chromosome</keyword>
<keyword id="KW-0164">Citrullination</keyword>
<keyword id="KW-0903">Direct protein sequencing</keyword>
<keyword id="KW-0238">DNA-binding</keyword>
<keyword id="KW-0379">Hydroxylation</keyword>
<keyword id="KW-0488">Methylation</keyword>
<keyword id="KW-0539">Nucleus</keyword>
<keyword id="KW-0597">Phosphoprotein</keyword>
<keyword id="KW-1267">Proteomics identification</keyword>
<keyword id="KW-1185">Reference proteome</keyword>
<comment type="function">
    <text evidence="1">Histone H1 protein binds to linker DNA between nucleosomes forming the macromolecular structure known as the chromatin fiber. Histones H1 are necessary for the condensation of nucleosome chains into higher-order structured fibers. Also acts as a regulator of individual gene transcription through chromatin remodeling, nucleosome spacing and DNA methylation (By similarity).</text>
</comment>
<comment type="subunit">
    <text evidence="12">Interacts with TSC22D1 isoforms 2 and 5.</text>
</comment>
<comment type="interaction">
    <interactant intactId="EBI-358372">
        <id>P16403</id>
    </interactant>
    <interactant intactId="EBI-927482">
        <id>Q9UIG0</id>
        <label>BAZ1B</label>
    </interactant>
    <organismsDiffer>false</organismsDiffer>
    <experiments>2</experiments>
</comment>
<comment type="interaction">
    <interactant intactId="EBI-358372">
        <id>P16403</id>
    </interactant>
    <interactant intactId="EBI-357942">
        <id>Q9NR30</id>
        <label>DDX21</label>
    </interactant>
    <organismsDiffer>false</organismsDiffer>
    <experiments>2</experiments>
</comment>
<comment type="interaction">
    <interactant intactId="EBI-358372">
        <id>P16403</id>
    </interactant>
    <interactant intactId="EBI-744088">
        <id>Q8IY81</id>
        <label>FTSJ3</label>
    </interactant>
    <organismsDiffer>false</organismsDiffer>
    <experiments>2</experiments>
</comment>
<comment type="interaction">
    <interactant intactId="EBI-358372">
        <id>P16403</id>
    </interactant>
    <interactant intactId="EBI-1642157">
        <id>Q8IUE6</id>
        <label>H2AC21</label>
    </interactant>
    <organismsDiffer>false</organismsDiffer>
    <experiments>2</experiments>
</comment>
<comment type="interaction">
    <interactant intactId="EBI-358372">
        <id>P16403</id>
    </interactant>
    <interactant intactId="EBI-1056125">
        <id>Q16778</id>
        <label>H2BC21</label>
    </interactant>
    <organismsDiffer>false</organismsDiffer>
    <experiments>2</experiments>
</comment>
<comment type="subcellular location">
    <subcellularLocation>
        <location>Nucleus</location>
    </subcellularLocation>
    <subcellularLocation>
        <location>Chromosome</location>
    </subcellularLocation>
    <text>Mainly localizes in euchromatin. Distribution goes in parallel with DNA concentration.</text>
</comment>
<comment type="domain">
    <text evidence="1">The C-terminal domain is required for high-affinity binding to chromatin.</text>
</comment>
<comment type="PTM">
    <text evidence="3">H1 histones are progressively phosphorylated during the cell cycle, becoming maximally phosphorylated during late G2 phase and M phase, and being dephosphorylated sharply thereafter.</text>
</comment>
<comment type="PTM">
    <text evidence="8">Crotonylation (Kcr) is specifically present in male germ cells and marks testis-specific genes in post-meiotic cells, including X-linked genes that escape sex chromosome inactivation in haploid cells. Crotonylation marks active promoters and enhancers and confers resistance to transcriptional repressors. It is also associated with post-meiotically activated genes on autosomes.</text>
</comment>
<comment type="PTM">
    <text evidence="3">Citrullination at Arg-54 (H1R54ci) by PADI4 takes place within the DNA-binding site of H1 and results in its displacement from chromatin and global chromatin decondensation, thereby promoting pluripotency and stem cell maintenance.</text>
</comment>
<comment type="PTM">
    <text evidence="11">ADP-ribosylated on Ser-188 in response to DNA damage.</text>
</comment>
<comment type="similarity">
    <text evidence="5">Belongs to the histone H1/H5 family.</text>
</comment>
<organism>
    <name type="scientific">Homo sapiens</name>
    <name type="common">Human</name>
    <dbReference type="NCBI Taxonomy" id="9606"/>
    <lineage>
        <taxon>Eukaryota</taxon>
        <taxon>Metazoa</taxon>
        <taxon>Chordata</taxon>
        <taxon>Craniata</taxon>
        <taxon>Vertebrata</taxon>
        <taxon>Euteleostomi</taxon>
        <taxon>Mammalia</taxon>
        <taxon>Eutheria</taxon>
        <taxon>Euarchontoglires</taxon>
        <taxon>Primates</taxon>
        <taxon>Haplorrhini</taxon>
        <taxon>Catarrhini</taxon>
        <taxon>Hominidae</taxon>
        <taxon>Homo</taxon>
    </lineage>
</organism>
<proteinExistence type="evidence at protein level"/>
<name>H12_HUMAN</name>
<feature type="initiator methionine" description="Removed" evidence="10 13 14 16 17 18 19 20 21">
    <location>
        <position position="1"/>
    </location>
</feature>
<feature type="chain" id="PRO_0000195906" description="Histone H1.2">
    <location>
        <begin position="2"/>
        <end position="213"/>
    </location>
</feature>
<feature type="domain" description="H15" evidence="5">
    <location>
        <begin position="36"/>
        <end position="109"/>
    </location>
</feature>
<feature type="region of interest" description="Disordered" evidence="6">
    <location>
        <begin position="1"/>
        <end position="41"/>
    </location>
</feature>
<feature type="region of interest" description="Disordered" evidence="6">
    <location>
        <begin position="92"/>
        <end position="213"/>
    </location>
</feature>
<feature type="compositionally biased region" description="Low complexity" evidence="6">
    <location>
        <begin position="1"/>
        <end position="17"/>
    </location>
</feature>
<feature type="compositionally biased region" description="Basic residues" evidence="6">
    <location>
        <begin position="119"/>
        <end position="140"/>
    </location>
</feature>
<feature type="compositionally biased region" description="Basic residues" evidence="6">
    <location>
        <begin position="149"/>
        <end position="160"/>
    </location>
</feature>
<feature type="compositionally biased region" description="Basic residues" evidence="6">
    <location>
        <begin position="169"/>
        <end position="186"/>
    </location>
</feature>
<feature type="compositionally biased region" description="Basic residues" evidence="6">
    <location>
        <begin position="193"/>
        <end position="213"/>
    </location>
</feature>
<feature type="modified residue" description="N-acetylserine; partial" evidence="13 14 16 17 18 19 20 21">
    <location>
        <position position="2"/>
    </location>
</feature>
<feature type="modified residue" description="Phosphoserine" evidence="17 18">
    <location>
        <position position="2"/>
    </location>
</feature>
<feature type="modified residue" description="N6-acetyllysine" evidence="3">
    <location>
        <position position="17"/>
    </location>
</feature>
<feature type="modified residue" description="N6-(2-hydroxyisobutyryl)lysine" evidence="9">
    <location>
        <position position="23"/>
    </location>
</feature>
<feature type="modified residue" description="N6-(2-hydroxyisobutyryl)lysine" evidence="9">
    <location>
        <position position="26"/>
    </location>
</feature>
<feature type="modified residue" description="N6-(2-hydroxyisobutyryl)lysine" evidence="9">
    <location>
        <position position="27"/>
    </location>
</feature>
<feature type="modified residue" description="N6-(beta-hydroxybutyryl)lysine; alternate" evidence="4">
    <location>
        <position position="34"/>
    </location>
</feature>
<feature type="modified residue" description="N6-crotonyllysine; alternate" evidence="8">
    <location>
        <position position="34"/>
    </location>
</feature>
<feature type="modified residue" description="N6-methyllysine; alternate" evidence="14">
    <location>
        <position position="34"/>
    </location>
</feature>
<feature type="modified residue" description="N6-(2-hydroxyisobutyryl)lysine" evidence="9">
    <location>
        <position position="46"/>
    </location>
</feature>
<feature type="modified residue" description="N6-(2-hydroxyisobutyryl)lysine; alternate" evidence="9">
    <location>
        <position position="52"/>
    </location>
</feature>
<feature type="modified residue" description="N6-(beta-hydroxybutyryl)lysine; alternate" evidence="4">
    <location>
        <position position="52"/>
    </location>
</feature>
<feature type="modified residue" description="Citrulline" evidence="3">
    <location>
        <position position="54"/>
    </location>
</feature>
<feature type="modified residue" description="N6-(2-hydroxyisobutyryl)lysine" evidence="9">
    <location>
        <position position="63"/>
    </location>
</feature>
<feature type="modified residue" description="N6-(2-hydroxyisobutyryl)lysine; alternate" evidence="9">
    <location>
        <position position="64"/>
    </location>
</feature>
<feature type="modified residue" description="N6-(beta-hydroxybutyryl)lysine; alternate" evidence="4">
    <location>
        <position position="64"/>
    </location>
</feature>
<feature type="modified residue" description="N6-crotonyllysine; alternate" evidence="8">
    <location>
        <position position="64"/>
    </location>
</feature>
<feature type="modified residue" description="N6-(2-hydroxyisobutyryl)lysine" evidence="9">
    <location>
        <position position="75"/>
    </location>
</feature>
<feature type="modified residue" description="N6-(2-hydroxyisobutyryl)lysine" evidence="9">
    <location>
        <position position="81"/>
    </location>
</feature>
<feature type="modified residue" description="N6-(2-hydroxyisobutyryl)lysine; alternate" evidence="9">
    <location>
        <position position="85"/>
    </location>
</feature>
<feature type="modified residue" description="N6-(beta-hydroxybutyryl)lysine; alternate" evidence="4">
    <location>
        <position position="85"/>
    </location>
</feature>
<feature type="modified residue" description="N6-crotonyllysine; alternate" evidence="8">
    <location>
        <position position="85"/>
    </location>
</feature>
<feature type="modified residue" description="N6-(2-hydroxyisobutyryl)lysine; alternate" evidence="9">
    <location>
        <position position="90"/>
    </location>
</feature>
<feature type="modified residue" description="N6-(beta-hydroxybutyryl)lysine; alternate" evidence="4">
    <location>
        <position position="90"/>
    </location>
</feature>
<feature type="modified residue" description="N6-crotonyllysine; alternate" evidence="8">
    <location>
        <position position="90"/>
    </location>
</feature>
<feature type="modified residue" description="N6-(2-hydroxyisobutyryl)lysine; alternate" evidence="9">
    <location>
        <position position="97"/>
    </location>
</feature>
<feature type="modified residue" description="N6-crotonyllysine; alternate" evidence="8">
    <location>
        <position position="97"/>
    </location>
</feature>
<feature type="modified residue" description="N6-succinyllysine; alternate" evidence="3">
    <location>
        <position position="97"/>
    </location>
</feature>
<feature type="modified residue" description="Phosphoserine; by PKC" evidence="2">
    <location>
        <position position="104"/>
    </location>
</feature>
<feature type="modified residue" description="N6-(beta-hydroxybutyryl)lysine" evidence="4">
    <location>
        <position position="106"/>
    </location>
</feature>
<feature type="modified residue" description="N6-(2-hydroxyisobutyryl)lysine" evidence="9">
    <location>
        <position position="110"/>
    </location>
</feature>
<feature type="modified residue" description="N6-(2-hydroxyisobutyryl)lysine" evidence="9">
    <location>
        <position position="117"/>
    </location>
</feature>
<feature type="modified residue" description="N6-(2-hydroxyisobutyryl)lysine" evidence="9">
    <location>
        <position position="121"/>
    </location>
</feature>
<feature type="modified residue" description="N6-(2-hydroxyisobutyryl)lysine" evidence="9">
    <location>
        <position position="129"/>
    </location>
</feature>
<feature type="modified residue" description="N6-(2-hydroxyisobutyryl)lysine" evidence="9">
    <location>
        <position position="136"/>
    </location>
</feature>
<feature type="modified residue" description="Phosphothreonine" evidence="17">
    <location>
        <position position="146"/>
    </location>
</feature>
<feature type="modified residue" description="N6-(2-hydroxyisobutyryl)lysine" evidence="9">
    <location>
        <position position="148"/>
    </location>
</feature>
<feature type="modified residue" description="N6-(2-hydroxyisobutyryl)lysine; alternate" evidence="9">
    <location>
        <position position="159"/>
    </location>
</feature>
<feature type="modified residue" description="N6-crotonyllysine; alternate" evidence="8">
    <location>
        <position position="159"/>
    </location>
</feature>
<feature type="modified residue" description="N6-(2-hydroxyisobutyryl)lysine; alternate" evidence="9">
    <location>
        <position position="168"/>
    </location>
</feature>
<feature type="modified residue" description="N6-crotonyllysine; alternate" evidence="8">
    <location>
        <position position="168"/>
    </location>
</feature>
<feature type="modified residue" description="N6-methyllysine; by EHMT1 and EHMT2" evidence="7">
    <location>
        <position position="187"/>
    </location>
</feature>
<feature type="modified residue" description="ADP-ribosylserine" evidence="11">
    <location>
        <position position="188"/>
    </location>
</feature>
<feature type="modified residue" description="N6-(2-hydroxyisobutyryl)lysine" evidence="9">
    <location>
        <position position="213"/>
    </location>
</feature>
<feature type="sequence variant" id="VAR_003618" description="In dbSNP:rs2230653.">
    <original>A</original>
    <variation>V</variation>
    <location>
        <position position="18"/>
    </location>
</feature>
<feature type="sequence variant" id="VAR_049304" description="In dbSNP:rs34810376.">
    <original>S</original>
    <variation>A</variation>
    <location>
        <position position="113"/>
    </location>
</feature>
<feature type="sequence variant" id="VAR_049305" description="In dbSNP:rs12111009.">
    <original>G</original>
    <variation>A</variation>
    <location>
        <position position="124"/>
    </location>
</feature>
<feature type="mutagenesis site" description="Abolishes methylation." evidence="7">
    <original>K</original>
    <variation>R</variation>
    <location>
        <position position="187"/>
    </location>
</feature>